<accession>P10068</accession>
<dbReference type="EMBL" id="M19357">
    <property type="protein sequence ID" value="AAA40988.1"/>
    <property type="molecule type" value="Genomic_DNA"/>
</dbReference>
<dbReference type="PIR" id="E24060">
    <property type="entry name" value="E24060"/>
</dbReference>
<dbReference type="SMR" id="P10068"/>
<dbReference type="FunCoup" id="P10068">
    <property type="interactions" value="6"/>
</dbReference>
<dbReference type="STRING" id="10116.ENSRNOP00000045818"/>
<dbReference type="PaxDb" id="10116-ENSRNOP00000045818"/>
<dbReference type="UCSC" id="RGD:1586353">
    <property type="organism name" value="rat"/>
</dbReference>
<dbReference type="AGR" id="RGD:1586353"/>
<dbReference type="RGD" id="1586353">
    <property type="gene designation" value="Crygf"/>
</dbReference>
<dbReference type="eggNOG" id="ENOG502RXJY">
    <property type="taxonomic scope" value="Eukaryota"/>
</dbReference>
<dbReference type="InParanoid" id="P10068"/>
<dbReference type="OrthoDB" id="8407241at2759"/>
<dbReference type="PhylomeDB" id="P10068"/>
<dbReference type="PRO" id="PR:P10068"/>
<dbReference type="Proteomes" id="UP000002494">
    <property type="component" value="Unplaced"/>
</dbReference>
<dbReference type="GO" id="GO:0005212">
    <property type="term" value="F:structural constituent of eye lens"/>
    <property type="evidence" value="ECO:0000318"/>
    <property type="project" value="GO_Central"/>
</dbReference>
<dbReference type="GO" id="GO:0002088">
    <property type="term" value="P:lens development in camera-type eye"/>
    <property type="evidence" value="ECO:0000270"/>
    <property type="project" value="RGD"/>
</dbReference>
<dbReference type="GO" id="GO:0007601">
    <property type="term" value="P:visual perception"/>
    <property type="evidence" value="ECO:0000318"/>
    <property type="project" value="GO_Central"/>
</dbReference>
<dbReference type="FunFam" id="2.60.20.10:FF:000001">
    <property type="entry name" value="Crystallin gamma S"/>
    <property type="match status" value="1"/>
</dbReference>
<dbReference type="FunFam" id="2.60.20.10:FF:000003">
    <property type="entry name" value="Crystallin gamma S"/>
    <property type="match status" value="1"/>
</dbReference>
<dbReference type="Gene3D" id="2.60.20.10">
    <property type="entry name" value="Crystallins"/>
    <property type="match status" value="2"/>
</dbReference>
<dbReference type="InterPro" id="IPR050252">
    <property type="entry name" value="Beta/Gamma-Crystallin"/>
</dbReference>
<dbReference type="InterPro" id="IPR001064">
    <property type="entry name" value="Beta/gamma_crystallin"/>
</dbReference>
<dbReference type="InterPro" id="IPR011024">
    <property type="entry name" value="G_crystallin-like"/>
</dbReference>
<dbReference type="PANTHER" id="PTHR11818">
    <property type="entry name" value="BETA/GAMMA CRYSTALLIN"/>
    <property type="match status" value="1"/>
</dbReference>
<dbReference type="PANTHER" id="PTHR11818:SF125">
    <property type="entry name" value="GAMMA-CRYSTALLIN E-RELATED"/>
    <property type="match status" value="1"/>
</dbReference>
<dbReference type="Pfam" id="PF00030">
    <property type="entry name" value="Crystall"/>
    <property type="match status" value="2"/>
</dbReference>
<dbReference type="PRINTS" id="PR01367">
    <property type="entry name" value="BGCRYSTALLIN"/>
</dbReference>
<dbReference type="SMART" id="SM00247">
    <property type="entry name" value="XTALbg"/>
    <property type="match status" value="2"/>
</dbReference>
<dbReference type="SUPFAM" id="SSF49695">
    <property type="entry name" value="gamma-Crystallin-like"/>
    <property type="match status" value="1"/>
</dbReference>
<dbReference type="PROSITE" id="PS50915">
    <property type="entry name" value="CRYSTALLIN_BETA_GAMMA"/>
    <property type="match status" value="4"/>
</dbReference>
<evidence type="ECO:0000255" key="1">
    <source>
        <dbReference type="PROSITE-ProRule" id="PRU00028"/>
    </source>
</evidence>
<evidence type="ECO:0000305" key="2"/>
<comment type="function">
    <text>Crystallins are the dominant structural components of the vertebrate eye lens.</text>
</comment>
<comment type="domain">
    <text>Has a two-domain beta-structure, folded into four very similar Greek key motifs.</text>
</comment>
<comment type="miscellaneous">
    <text>There are six different gamma crystallins identified in rat lens.</text>
</comment>
<comment type="similarity">
    <text evidence="2">Belongs to the beta/gamma-crystallin family.</text>
</comment>
<name>CRGF_RAT</name>
<gene>
    <name type="primary">Crygf</name>
</gene>
<keyword id="KW-0273">Eye lens protein</keyword>
<keyword id="KW-1185">Reference proteome</keyword>
<keyword id="KW-0677">Repeat</keyword>
<feature type="chain" id="PRO_0000057594" description="Gamma-crystallin F">
    <location>
        <begin position="1"/>
        <end position="174"/>
    </location>
</feature>
<feature type="domain" description="Beta/gamma crystallin 'Greek key' 1" evidence="1">
    <location>
        <begin position="2"/>
        <end position="40"/>
    </location>
</feature>
<feature type="domain" description="Beta/gamma crystallin 'Greek key' 2" evidence="1">
    <location>
        <begin position="41"/>
        <end position="83"/>
    </location>
</feature>
<feature type="domain" description="Beta/gamma crystallin 'Greek key' 3" evidence="1">
    <location>
        <begin position="88"/>
        <end position="128"/>
    </location>
</feature>
<feature type="domain" description="Beta/gamma crystallin 'Greek key' 4" evidence="1">
    <location>
        <begin position="129"/>
        <end position="171"/>
    </location>
</feature>
<feature type="region of interest" description="Connecting peptide">
    <location>
        <begin position="84"/>
        <end position="87"/>
    </location>
</feature>
<organism>
    <name type="scientific">Rattus norvegicus</name>
    <name type="common">Rat</name>
    <dbReference type="NCBI Taxonomy" id="10116"/>
    <lineage>
        <taxon>Eukaryota</taxon>
        <taxon>Metazoa</taxon>
        <taxon>Chordata</taxon>
        <taxon>Craniata</taxon>
        <taxon>Vertebrata</taxon>
        <taxon>Euteleostomi</taxon>
        <taxon>Mammalia</taxon>
        <taxon>Eutheria</taxon>
        <taxon>Euarchontoglires</taxon>
        <taxon>Glires</taxon>
        <taxon>Rodentia</taxon>
        <taxon>Myomorpha</taxon>
        <taxon>Muroidea</taxon>
        <taxon>Muridae</taxon>
        <taxon>Murinae</taxon>
        <taxon>Rattus</taxon>
    </lineage>
</organism>
<reference key="1">
    <citation type="journal article" date="1986" name="J. Mol. Biol.">
        <title>Concerted and divergent evolution within the rat gamma-crystallin gene family.</title>
        <authorList>
            <person name="den Dunnen J.T."/>
            <person name="Moormann R.J.M."/>
            <person name="Lubsen N.H."/>
            <person name="Schoenmakers J.G.G."/>
        </authorList>
    </citation>
    <scope>NUCLEOTIDE SEQUENCE [GENOMIC DNA]</scope>
</reference>
<reference key="2">
    <citation type="journal article" date="1989" name="Gene">
        <title>Nucleotide sequence of the rat gamma-crystallin gene region and comparison with an orthologous human region.</title>
        <authorList>
            <person name="den Dunnen J.T."/>
            <person name="van Neck J.W."/>
            <person name="Cremers F.P.M."/>
            <person name="Lubsen N.H."/>
            <person name="Schoenmakers J.G.G."/>
        </authorList>
    </citation>
    <scope>NUCLEOTIDE SEQUENCE [GENOMIC DNA]</scope>
</reference>
<protein>
    <recommendedName>
        <fullName>Gamma-crystallin F</fullName>
    </recommendedName>
    <alternativeName>
        <fullName>Gamma-F-crystallin</fullName>
    </alternativeName>
    <alternativeName>
        <fullName>Gamma-crystallin 4-1</fullName>
    </alternativeName>
</protein>
<proteinExistence type="inferred from homology"/>
<sequence length="174" mass="21342">MGKITFYEDRGFQGRHYECSTDHSNLQPYFSRCNSVRVDSGCWMLYEQPNFTGCQYFLRRGDYPDYQQWMGFSDSVRSCHLIPHSSSHRIRIYEREDYRGQMVEITDDCPHLQDRFHFSDFHSFHVIEGYWVLYEMPNYRGRQYLLRPREYRRYHDWGAMNARVGSLRRIMDYY</sequence>